<reference key="1">
    <citation type="journal article" date="2000" name="Curr. Biol.">
        <title>Tissue-specific expression and subcellular localisation of mammalian delta-tubulin.</title>
        <authorList>
            <person name="Smrzka O.W."/>
            <person name="Delgehyr N."/>
            <person name="Bornens M."/>
        </authorList>
    </citation>
    <scope>NUCLEOTIDE SEQUENCE [MRNA]</scope>
    <source>
        <strain>BALB/cJ</strain>
    </source>
</reference>
<reference key="2">
    <citation type="journal article" date="2004" name="Genome Res.">
        <title>The status, quality, and expansion of the NIH full-length cDNA project: the Mammalian Gene Collection (MGC).</title>
        <authorList>
            <consortium name="The MGC Project Team"/>
        </authorList>
    </citation>
    <scope>NUCLEOTIDE SEQUENCE [LARGE SCALE MRNA]</scope>
    <source>
        <strain>FVB/N</strain>
        <tissue>Mammary gland</tissue>
    </source>
</reference>
<reference key="3">
    <citation type="journal article" date="2018" name="Dev. Cell">
        <title>CRISPR screens uncover genes that regulate target cell sensitivity to the morphogen sonic hedgehog.</title>
        <authorList>
            <person name="Pusapati G.V."/>
            <person name="Kong J.H."/>
            <person name="Patel B.B."/>
            <person name="Krishnan A."/>
            <person name="Sagner A."/>
            <person name="Kinnebrew M."/>
            <person name="Briscoe J."/>
            <person name="Aravind L."/>
            <person name="Rohatgi R."/>
        </authorList>
    </citation>
    <scope>FUNCTION</scope>
    <scope>SUBCELLULAR LOCATION</scope>
</reference>
<reference key="4">
    <citation type="journal article" date="2018" name="Nat. Genet.">
        <title>A CRISPR-based screen for Hedgehog signaling provides insights into ciliary function and ciliopathies.</title>
        <authorList>
            <person name="Breslow D.K."/>
            <person name="Hoogendoorn S."/>
            <person name="Kopp A.R."/>
            <person name="Morgens D.W."/>
            <person name="Vu B.K."/>
            <person name="Kennedy M.C."/>
            <person name="Han K."/>
            <person name="Li A."/>
            <person name="Hess G.T."/>
            <person name="Bassik M.C."/>
            <person name="Chen J.K."/>
            <person name="Nachury M.V."/>
        </authorList>
    </citation>
    <scope>SUBUNIT</scope>
    <scope>IDENTIFICATION BY MASS SPECTROMETRY</scope>
</reference>
<protein>
    <recommendedName>
        <fullName>Tubulin delta chain</fullName>
    </recommendedName>
    <alternativeName>
        <fullName>Delta-tubulin</fullName>
    </alternativeName>
</protein>
<feature type="chain" id="PRO_0000048485" description="Tubulin delta chain">
    <location>
        <begin position="1"/>
        <end position="455"/>
    </location>
</feature>
<feature type="binding site" evidence="1">
    <location>
        <begin position="143"/>
        <end position="149"/>
    </location>
    <ligand>
        <name>GTP</name>
        <dbReference type="ChEBI" id="CHEBI:37565"/>
    </ligand>
</feature>
<sequence length="455" mass="51023">MSIVTVQLGQCGNQIGFEVFDALFRDSHCSQGLCSKRDNEAYQASCRERFFREEENGVPVARAVLVDMEPKVINQTLSKAAQSGRWNYGQHTSFCQKQGSGNNWAYGYSVHGPKHEESIMNLIQTEVEKCDSLSGFFIIMSMAGGTGSGLGAFVTQKLQDQYSSSLKMNQIIWPYGTGEVIVQNYNSILTLSHLYRSSDALLIHENDAVHKICAKRMNIKQISFRDLNQVLAHQLGSVFQPTYSEDSSFHYRRNPLGDLMEHLVPHPEFKMLGVRNIPQMSAASLAYSAFTWAGLLKHLRQMLISSAKMEEGINWQVRPPLTGLPPIGKASAHKEHHFNTSLANLVVLRGREVHSADVEGFKDPALYTSWLEPVDAFSVWKTQRAFDKYEKSAALVSNSQLLVKPLDMIVGKAWNMFSSKAFIHQYTKFGMEEEDFLDSFALLEQVVASYGSLGP</sequence>
<comment type="function">
    <text evidence="3">Acts as a positive regulator of hedgehog signaling and regulates ciliary function (PubMed:29290584).</text>
</comment>
<comment type="subunit">
    <text evidence="4">Found in a complex with TEDC1, TEDC2, TUBE1 and TUBD1.</text>
</comment>
<comment type="subcellular location">
    <subcellularLocation>
        <location evidence="3">Cell projection</location>
        <location evidence="3">Cilium</location>
    </subcellularLocation>
    <subcellularLocation>
        <location evidence="2">Cytoplasm</location>
        <location evidence="2">Cytoskeleton</location>
        <location evidence="2">Microtubule organizing center</location>
        <location evidence="2">Centrosome</location>
        <location evidence="2">Centriole</location>
    </subcellularLocation>
    <subcellularLocation>
        <location evidence="2">Cytoplasm</location>
    </subcellularLocation>
    <subcellularLocation>
        <location evidence="2">Nucleus</location>
    </subcellularLocation>
    <text evidence="2">Associated with centrioles (PubMed:10753753). Both cytoplasmic and nuclear (PubMed:10753753). In the elongating spermatid it is associated with the manchette, a specialized microtubule system present during reshaping of the sperm head (PubMed:10753753).</text>
</comment>
<comment type="tissue specificity">
    <text>Highly expressed in testis.</text>
</comment>
<comment type="similarity">
    <text evidence="5">Belongs to the tubulin family.</text>
</comment>
<keyword id="KW-0966">Cell projection</keyword>
<keyword id="KW-0970">Cilium biogenesis/degradation</keyword>
<keyword id="KW-0963">Cytoplasm</keyword>
<keyword id="KW-0206">Cytoskeleton</keyword>
<keyword id="KW-0217">Developmental protein</keyword>
<keyword id="KW-0342">GTP-binding</keyword>
<keyword id="KW-0493">Microtubule</keyword>
<keyword id="KW-0547">Nucleotide-binding</keyword>
<keyword id="KW-0539">Nucleus</keyword>
<keyword id="KW-1185">Reference proteome</keyword>
<dbReference type="EMBL" id="AF081568">
    <property type="protein sequence ID" value="AAD52009.1"/>
    <property type="molecule type" value="mRNA"/>
</dbReference>
<dbReference type="EMBL" id="BC026465">
    <property type="protein sequence ID" value="AAH26465.1"/>
    <property type="molecule type" value="mRNA"/>
</dbReference>
<dbReference type="CCDS" id="CCDS25202.1"/>
<dbReference type="RefSeq" id="NP_001185976.1">
    <property type="nucleotide sequence ID" value="NM_001199047.1"/>
</dbReference>
<dbReference type="RefSeq" id="NP_062730.1">
    <property type="nucleotide sequence ID" value="NM_019756.3"/>
</dbReference>
<dbReference type="SMR" id="Q9R1K7"/>
<dbReference type="BioGRID" id="207971">
    <property type="interactions" value="1"/>
</dbReference>
<dbReference type="FunCoup" id="Q9R1K7">
    <property type="interactions" value="1910"/>
</dbReference>
<dbReference type="STRING" id="10090.ENSMUSP00000020821"/>
<dbReference type="iPTMnet" id="Q9R1K7"/>
<dbReference type="PhosphoSitePlus" id="Q9R1K7"/>
<dbReference type="PaxDb" id="10090-ENSMUSP00000064383"/>
<dbReference type="ProteomicsDB" id="263082"/>
<dbReference type="Antibodypedia" id="3899">
    <property type="antibodies" value="134 antibodies from 24 providers"/>
</dbReference>
<dbReference type="DNASU" id="56427"/>
<dbReference type="Ensembl" id="ENSMUST00000069503.13">
    <property type="protein sequence ID" value="ENSMUSP00000064383.7"/>
    <property type="gene ID" value="ENSMUSG00000020513.16"/>
</dbReference>
<dbReference type="Ensembl" id="ENSMUST00000167178.9">
    <property type="protein sequence ID" value="ENSMUSP00000130909.3"/>
    <property type="gene ID" value="ENSMUSG00000020513.16"/>
</dbReference>
<dbReference type="GeneID" id="56427"/>
<dbReference type="KEGG" id="mmu:56427"/>
<dbReference type="UCSC" id="uc007kss.1">
    <property type="organism name" value="mouse"/>
</dbReference>
<dbReference type="AGR" id="MGI:1891826"/>
<dbReference type="CTD" id="51174"/>
<dbReference type="MGI" id="MGI:1891826">
    <property type="gene designation" value="Tubd1"/>
</dbReference>
<dbReference type="VEuPathDB" id="HostDB:ENSMUSG00000020513"/>
<dbReference type="eggNOG" id="KOG1374">
    <property type="taxonomic scope" value="Eukaryota"/>
</dbReference>
<dbReference type="GeneTree" id="ENSGT00940000157069"/>
<dbReference type="HOGENOM" id="CLU_015718_1_0_1"/>
<dbReference type="InParanoid" id="Q9R1K7"/>
<dbReference type="OMA" id="ACHPEYK"/>
<dbReference type="OrthoDB" id="10250004at2759"/>
<dbReference type="TreeFam" id="TF329833"/>
<dbReference type="BioGRID-ORCS" id="56427">
    <property type="hits" value="13 hits in 77 CRISPR screens"/>
</dbReference>
<dbReference type="ChiTaRS" id="Tubd1">
    <property type="organism name" value="mouse"/>
</dbReference>
<dbReference type="PRO" id="PR:Q9R1K7"/>
<dbReference type="Proteomes" id="UP000000589">
    <property type="component" value="Chromosome 11"/>
</dbReference>
<dbReference type="RNAct" id="Q9R1K7">
    <property type="molecule type" value="protein"/>
</dbReference>
<dbReference type="Bgee" id="ENSMUSG00000020513">
    <property type="expression patterns" value="Expressed in spermatocyte and 153 other cell types or tissues"/>
</dbReference>
<dbReference type="ExpressionAtlas" id="Q9R1K7">
    <property type="expression patterns" value="baseline and differential"/>
</dbReference>
<dbReference type="GO" id="GO:0005814">
    <property type="term" value="C:centriole"/>
    <property type="evidence" value="ECO:0007669"/>
    <property type="project" value="UniProtKB-SubCell"/>
</dbReference>
<dbReference type="GO" id="GO:0005929">
    <property type="term" value="C:cilium"/>
    <property type="evidence" value="ECO:0007669"/>
    <property type="project" value="UniProtKB-SubCell"/>
</dbReference>
<dbReference type="GO" id="GO:0005737">
    <property type="term" value="C:cytoplasm"/>
    <property type="evidence" value="ECO:0000314"/>
    <property type="project" value="MGI"/>
</dbReference>
<dbReference type="GO" id="GO:0005829">
    <property type="term" value="C:cytosol"/>
    <property type="evidence" value="ECO:0007669"/>
    <property type="project" value="Ensembl"/>
</dbReference>
<dbReference type="GO" id="GO:0005874">
    <property type="term" value="C:microtubule"/>
    <property type="evidence" value="ECO:0007669"/>
    <property type="project" value="UniProtKB-KW"/>
</dbReference>
<dbReference type="GO" id="GO:0005654">
    <property type="term" value="C:nucleoplasm"/>
    <property type="evidence" value="ECO:0007669"/>
    <property type="project" value="Ensembl"/>
</dbReference>
<dbReference type="GO" id="GO:0005634">
    <property type="term" value="C:nucleus"/>
    <property type="evidence" value="ECO:0000314"/>
    <property type="project" value="MGI"/>
</dbReference>
<dbReference type="GO" id="GO:0005525">
    <property type="term" value="F:GTP binding"/>
    <property type="evidence" value="ECO:0007669"/>
    <property type="project" value="UniProtKB-KW"/>
</dbReference>
<dbReference type="GO" id="GO:0005200">
    <property type="term" value="F:structural constituent of cytoskeleton"/>
    <property type="evidence" value="ECO:0007669"/>
    <property type="project" value="InterPro"/>
</dbReference>
<dbReference type="GO" id="GO:0030030">
    <property type="term" value="P:cell projection organization"/>
    <property type="evidence" value="ECO:0007669"/>
    <property type="project" value="UniProtKB-KW"/>
</dbReference>
<dbReference type="GO" id="GO:0007017">
    <property type="term" value="P:microtubule-based process"/>
    <property type="evidence" value="ECO:0007669"/>
    <property type="project" value="InterPro"/>
</dbReference>
<dbReference type="GO" id="GO:0045880">
    <property type="term" value="P:positive regulation of smoothened signaling pathway"/>
    <property type="evidence" value="ECO:0000315"/>
    <property type="project" value="UniProtKB"/>
</dbReference>
<dbReference type="CDD" id="cd02189">
    <property type="entry name" value="delta_zeta_tubulin-like"/>
    <property type="match status" value="1"/>
</dbReference>
<dbReference type="FunFam" id="1.10.287.600:FF:000010">
    <property type="entry name" value="Tubulin delta chain"/>
    <property type="match status" value="1"/>
</dbReference>
<dbReference type="FunFam" id="3.40.50.1440:FF:000021">
    <property type="entry name" value="Tubulin delta chain"/>
    <property type="match status" value="1"/>
</dbReference>
<dbReference type="Gene3D" id="1.10.287.600">
    <property type="entry name" value="Helix hairpin bin"/>
    <property type="match status" value="1"/>
</dbReference>
<dbReference type="Gene3D" id="3.40.50.1440">
    <property type="entry name" value="Tubulin/FtsZ, GTPase domain"/>
    <property type="match status" value="1"/>
</dbReference>
<dbReference type="InterPro" id="IPR002967">
    <property type="entry name" value="Delta_tubulin"/>
</dbReference>
<dbReference type="InterPro" id="IPR008280">
    <property type="entry name" value="Tub_FtsZ_C"/>
</dbReference>
<dbReference type="InterPro" id="IPR000217">
    <property type="entry name" value="Tubulin"/>
</dbReference>
<dbReference type="InterPro" id="IPR036525">
    <property type="entry name" value="Tubulin/FtsZ_GTPase_sf"/>
</dbReference>
<dbReference type="InterPro" id="IPR023123">
    <property type="entry name" value="Tubulin_C"/>
</dbReference>
<dbReference type="InterPro" id="IPR017975">
    <property type="entry name" value="Tubulin_CS"/>
</dbReference>
<dbReference type="InterPro" id="IPR003008">
    <property type="entry name" value="Tubulin_FtsZ_GTPase"/>
</dbReference>
<dbReference type="PANTHER" id="PTHR11588">
    <property type="entry name" value="TUBULIN"/>
    <property type="match status" value="1"/>
</dbReference>
<dbReference type="Pfam" id="PF00091">
    <property type="entry name" value="Tubulin"/>
    <property type="match status" value="1"/>
</dbReference>
<dbReference type="PRINTS" id="PR01224">
    <property type="entry name" value="DELTATUBULIN"/>
</dbReference>
<dbReference type="PRINTS" id="PR01161">
    <property type="entry name" value="TUBULIN"/>
</dbReference>
<dbReference type="SMART" id="SM00864">
    <property type="entry name" value="Tubulin"/>
    <property type="match status" value="1"/>
</dbReference>
<dbReference type="SUPFAM" id="SSF55307">
    <property type="entry name" value="Tubulin C-terminal domain-like"/>
    <property type="match status" value="1"/>
</dbReference>
<dbReference type="SUPFAM" id="SSF52490">
    <property type="entry name" value="Tubulin nucleotide-binding domain-like"/>
    <property type="match status" value="1"/>
</dbReference>
<dbReference type="PROSITE" id="PS00227">
    <property type="entry name" value="TUBULIN"/>
    <property type="match status" value="1"/>
</dbReference>
<evidence type="ECO:0000255" key="1"/>
<evidence type="ECO:0000269" key="2">
    <source>
    </source>
</evidence>
<evidence type="ECO:0000269" key="3">
    <source>
    </source>
</evidence>
<evidence type="ECO:0000269" key="4">
    <source>
    </source>
</evidence>
<evidence type="ECO:0000305" key="5"/>
<name>TBD_MOUSE</name>
<proteinExistence type="evidence at protein level"/>
<accession>Q9R1K7</accession>
<gene>
    <name type="primary">Tubd1</name>
</gene>
<organism>
    <name type="scientific">Mus musculus</name>
    <name type="common">Mouse</name>
    <dbReference type="NCBI Taxonomy" id="10090"/>
    <lineage>
        <taxon>Eukaryota</taxon>
        <taxon>Metazoa</taxon>
        <taxon>Chordata</taxon>
        <taxon>Craniata</taxon>
        <taxon>Vertebrata</taxon>
        <taxon>Euteleostomi</taxon>
        <taxon>Mammalia</taxon>
        <taxon>Eutheria</taxon>
        <taxon>Euarchontoglires</taxon>
        <taxon>Glires</taxon>
        <taxon>Rodentia</taxon>
        <taxon>Myomorpha</taxon>
        <taxon>Muroidea</taxon>
        <taxon>Muridae</taxon>
        <taxon>Murinae</taxon>
        <taxon>Mus</taxon>
        <taxon>Mus</taxon>
    </lineage>
</organism>